<evidence type="ECO:0000250" key="1"/>
<evidence type="ECO:0000256" key="2">
    <source>
        <dbReference type="SAM" id="MobiDB-lite"/>
    </source>
</evidence>
<evidence type="ECO:0000305" key="3"/>
<gene>
    <name type="primary">EDC1</name>
    <name type="ORF">PICST_67536</name>
</gene>
<keyword id="KW-0963">Cytoplasm</keyword>
<keyword id="KW-0507">mRNA processing</keyword>
<keyword id="KW-0866">Nonsense-mediated mRNA decay</keyword>
<keyword id="KW-1185">Reference proteome</keyword>
<keyword id="KW-0694">RNA-binding</keyword>
<organism>
    <name type="scientific">Scheffersomyces stipitis (strain ATCC 58785 / CBS 6054 / NBRC 10063 / NRRL Y-11545)</name>
    <name type="common">Yeast</name>
    <name type="synonym">Pichia stipitis</name>
    <dbReference type="NCBI Taxonomy" id="322104"/>
    <lineage>
        <taxon>Eukaryota</taxon>
        <taxon>Fungi</taxon>
        <taxon>Dikarya</taxon>
        <taxon>Ascomycota</taxon>
        <taxon>Saccharomycotina</taxon>
        <taxon>Pichiomycetes</taxon>
        <taxon>Debaryomycetaceae</taxon>
        <taxon>Scheffersomyces</taxon>
    </lineage>
</organism>
<sequence length="339" mass="36686">MMMHELPVPIHQSPGSENHSNPASREQSKPKKETERRLPSGAKVDFGNGSGSKKQQSNQKPKKGSDSEKKKANRANSPALPNGEKPNFYNDNKEKNKKLLDPSLPNGAKPNFSFYSESNSNSNSNVSSNSNKTKKKVHEQSLPSGEKPVFHDKPNKKTSSSNRPDKNGKKGPVEETYAGSSFHSSPAALNLPKPSFQRTSPKQQANTINDENSSPSSSASSVSMSSPRPVAGAVAAPPRYPVTAYPPGSIPGAVPNVPAGYYPPQYAQPQYIQPGFTYNVNPQGYIQYQYPPFHHPLAPAQIPYQQHPFPVNAQPPAHVGSAPQGQKISFDDLLGSAKK</sequence>
<reference key="1">
    <citation type="journal article" date="2007" name="Nat. Biotechnol.">
        <title>Genome sequence of the lignocellulose-bioconverting and xylose-fermenting yeast Pichia stipitis.</title>
        <authorList>
            <person name="Jeffries T.W."/>
            <person name="Grigoriev I.V."/>
            <person name="Grimwood J."/>
            <person name="Laplaza J.M."/>
            <person name="Aerts A."/>
            <person name="Salamov A."/>
            <person name="Schmutz J."/>
            <person name="Lindquist E."/>
            <person name="Dehal P."/>
            <person name="Shapiro H."/>
            <person name="Jin Y.-S."/>
            <person name="Passoth V."/>
            <person name="Richardson P.M."/>
        </authorList>
    </citation>
    <scope>NUCLEOTIDE SEQUENCE [LARGE SCALE GENOMIC DNA]</scope>
    <source>
        <strain>ATCC 58785 / CBS 6054 / NBRC 10063 / NRRL Y-11545</strain>
    </source>
</reference>
<comment type="function">
    <text evidence="1">mRNA-binding protein which stimulates mRNA decapping.</text>
</comment>
<comment type="subcellular location">
    <subcellularLocation>
        <location evidence="1">Cytoplasm</location>
    </subcellularLocation>
</comment>
<comment type="similarity">
    <text evidence="3">Belongs to the EDC family.</text>
</comment>
<feature type="chain" id="PRO_0000285360" description="Enhancer of mRNA-decapping protein 1">
    <location>
        <begin position="1"/>
        <end position="339"/>
    </location>
</feature>
<feature type="region of interest" description="Disordered" evidence="2">
    <location>
        <begin position="1"/>
        <end position="240"/>
    </location>
</feature>
<feature type="region of interest" description="Disordered" evidence="2">
    <location>
        <begin position="309"/>
        <end position="339"/>
    </location>
</feature>
<feature type="compositionally biased region" description="Polar residues" evidence="2">
    <location>
        <begin position="13"/>
        <end position="25"/>
    </location>
</feature>
<feature type="compositionally biased region" description="Basic and acidic residues" evidence="2">
    <location>
        <begin position="26"/>
        <end position="38"/>
    </location>
</feature>
<feature type="compositionally biased region" description="Basic and acidic residues" evidence="2">
    <location>
        <begin position="91"/>
        <end position="100"/>
    </location>
</feature>
<feature type="compositionally biased region" description="Low complexity" evidence="2">
    <location>
        <begin position="111"/>
        <end position="131"/>
    </location>
</feature>
<feature type="compositionally biased region" description="Basic and acidic residues" evidence="2">
    <location>
        <begin position="163"/>
        <end position="173"/>
    </location>
</feature>
<feature type="compositionally biased region" description="Polar residues" evidence="2">
    <location>
        <begin position="196"/>
        <end position="212"/>
    </location>
</feature>
<feature type="compositionally biased region" description="Low complexity" evidence="2">
    <location>
        <begin position="213"/>
        <end position="237"/>
    </location>
</feature>
<accession>A3LTE2</accession>
<proteinExistence type="inferred from homology"/>
<dbReference type="EMBL" id="CP000498">
    <property type="protein sequence ID" value="ABN66387.1"/>
    <property type="molecule type" value="Genomic_DNA"/>
</dbReference>
<dbReference type="RefSeq" id="XP_001384416.1">
    <property type="nucleotide sequence ID" value="XM_001384379.1"/>
</dbReference>
<dbReference type="GeneID" id="4838990"/>
<dbReference type="KEGG" id="pic:PICST_67536"/>
<dbReference type="eggNOG" id="ENOG502RIVV">
    <property type="taxonomic scope" value="Eukaryota"/>
</dbReference>
<dbReference type="HOGENOM" id="CLU_860511_0_0_1"/>
<dbReference type="InParanoid" id="A3LTE2"/>
<dbReference type="OMA" id="GYINYQY"/>
<dbReference type="OrthoDB" id="4026794at2759"/>
<dbReference type="Proteomes" id="UP000002258">
    <property type="component" value="Chromosome 4"/>
</dbReference>
<dbReference type="GO" id="GO:0005737">
    <property type="term" value="C:cytoplasm"/>
    <property type="evidence" value="ECO:0007669"/>
    <property type="project" value="UniProtKB-SubCell"/>
</dbReference>
<dbReference type="GO" id="GO:0003723">
    <property type="term" value="F:RNA binding"/>
    <property type="evidence" value="ECO:0007669"/>
    <property type="project" value="UniProtKB-KW"/>
</dbReference>
<dbReference type="GO" id="GO:0006397">
    <property type="term" value="P:mRNA processing"/>
    <property type="evidence" value="ECO:0007669"/>
    <property type="project" value="UniProtKB-KW"/>
</dbReference>
<dbReference type="GO" id="GO:0000184">
    <property type="term" value="P:nuclear-transcribed mRNA catabolic process, nonsense-mediated decay"/>
    <property type="evidence" value="ECO:0007669"/>
    <property type="project" value="UniProtKB-KW"/>
</dbReference>
<dbReference type="InterPro" id="IPR028322">
    <property type="entry name" value="PNRC-like_rgn"/>
</dbReference>
<dbReference type="Pfam" id="PF15365">
    <property type="entry name" value="PNRC"/>
    <property type="match status" value="1"/>
</dbReference>
<name>EDC1_PICST</name>
<protein>
    <recommendedName>
        <fullName>Enhancer of mRNA-decapping protein 1</fullName>
    </recommendedName>
</protein>